<reference evidence="3" key="1">
    <citation type="journal article" date="2016" name="J. Nat. Prod.">
        <title>Purification, Conformational Analysis, and Properties of a Family of Tigerinin Peptides from Skin Secretions of the Crowned Bullfrog Hoplobatrachus occipitalis.</title>
        <authorList>
            <person name="McLaughlin C.M."/>
            <person name="Lampis S."/>
            <person name="Mechkarska M."/>
            <person name="Coquet L."/>
            <person name="Jouenne T."/>
            <person name="King J.D."/>
            <person name="Mangoni M.L."/>
            <person name="Lukic M.L."/>
            <person name="Scorciapino M.A."/>
            <person name="Conlon J.M."/>
        </authorList>
    </citation>
    <scope>PROTEIN SEQUENCE</scope>
    <scope>FUNCTION</scope>
    <scope>SUBUNIT</scope>
    <scope>SUBCELLULAR LOCATION</scope>
    <scope>MASS SPECTROMETRY</scope>
    <scope>DISULFIDE BOND</scope>
    <source>
        <tissue evidence="2">Skin secretion</tissue>
    </source>
</reference>
<feature type="peptide" id="PRO_0000442178" description="Tigerinin-4O" evidence="1">
    <location>
        <begin position="1"/>
        <end position="11"/>
    </location>
</feature>
<feature type="disulfide bond" evidence="1">
    <location>
        <begin position="3"/>
        <end position="10"/>
    </location>
</feature>
<keyword id="KW-0878">Amphibian defense peptide</keyword>
<keyword id="KW-0903">Direct protein sequencing</keyword>
<keyword id="KW-1015">Disulfide bond</keyword>
<keyword id="KW-0964">Secreted</keyword>
<evidence type="ECO:0000269" key="1">
    <source>
    </source>
</evidence>
<evidence type="ECO:0000303" key="2">
    <source>
    </source>
</evidence>
<evidence type="ECO:0000305" key="3"/>
<evidence type="ECO:0000305" key="4">
    <source>
    </source>
</evidence>
<accession>C0HL44</accession>
<name>TIN4O_HOPOC</name>
<dbReference type="GO" id="GO:0005576">
    <property type="term" value="C:extracellular region"/>
    <property type="evidence" value="ECO:0007669"/>
    <property type="project" value="UniProtKB-SubCell"/>
</dbReference>
<dbReference type="GO" id="GO:0006952">
    <property type="term" value="P:defense response"/>
    <property type="evidence" value="ECO:0007669"/>
    <property type="project" value="UniProtKB-KW"/>
</dbReference>
<organism evidence="2">
    <name type="scientific">Hoplobatrachus occipitalis</name>
    <name type="common">African groove-crowned bullfrog</name>
    <name type="synonym">Rana occipitalis</name>
    <dbReference type="NCBI Taxonomy" id="127645"/>
    <lineage>
        <taxon>Eukaryota</taxon>
        <taxon>Metazoa</taxon>
        <taxon>Chordata</taxon>
        <taxon>Craniata</taxon>
        <taxon>Vertebrata</taxon>
        <taxon>Euteleostomi</taxon>
        <taxon>Amphibia</taxon>
        <taxon>Batrachia</taxon>
        <taxon>Anura</taxon>
        <taxon>Neobatrachia</taxon>
        <taxon>Ranoidea</taxon>
        <taxon>Dicroglossidae</taxon>
        <taxon>Dicroglossinae</taxon>
        <taxon>Hoplobatrachus</taxon>
    </lineage>
</organism>
<proteinExistence type="evidence at protein level"/>
<sequence length="11" mass="1246">RTCIPIPPVCF</sequence>
<protein>
    <recommendedName>
        <fullName evidence="2">Tigerinin-4O</fullName>
    </recommendedName>
</protein>
<comment type="function">
    <text evidence="1">Stimulates insulin release from beta cells at a concentration of 1 uM and release of glucagon-like peptide 1 (GLP-1) from enteroendocrine cells at a concentration of 10 nM in vitro. Reduces secretion of interferon gamma from peritoneal cells in a mouse model. Has no inhibitory activity against Gram-positive bacterium B.megaterium Bm11 or Gram-negative bacterium E.coli ATCC 25922 at concentrations of up to 100 uM. Has no hemolytic activity against mouse erythrocytes.</text>
</comment>
<comment type="subunit">
    <text evidence="1">Homodimer; the relevance of this is unclear as other tigerinins do not form dimers and a synthetic peptide remained a monomer.</text>
</comment>
<comment type="subcellular location">
    <subcellularLocation>
        <location evidence="1">Secreted</location>
    </subcellularLocation>
</comment>
<comment type="tissue specificity">
    <text evidence="4">Expressed by the skin glands.</text>
</comment>
<comment type="mass spectrometry" mass="2486.4" method="MALDI" evidence="1">
    <text>Homodimer.</text>
</comment>